<dbReference type="EMBL" id="CR387927">
    <property type="protein sequence ID" value="CAQ14247.1"/>
    <property type="molecule type" value="Genomic_DNA"/>
</dbReference>
<dbReference type="EMBL" id="BC053283">
    <property type="protein sequence ID" value="AAH53283.1"/>
    <property type="molecule type" value="mRNA"/>
</dbReference>
<dbReference type="RefSeq" id="NP_956678.1">
    <property type="nucleotide sequence ID" value="NM_200384.1"/>
</dbReference>
<dbReference type="SMR" id="B0UXU6"/>
<dbReference type="STRING" id="7955.ENSDARP00000135400"/>
<dbReference type="PaxDb" id="7955-ENSDARP00000015004"/>
<dbReference type="PeptideAtlas" id="B0UXU6"/>
<dbReference type="DNASU" id="393355"/>
<dbReference type="Ensembl" id="ENSDART00000167674">
    <property type="protein sequence ID" value="ENSDARP00000135400"/>
    <property type="gene ID" value="ENSDARG00000102080"/>
</dbReference>
<dbReference type="Ensembl" id="ENSDART00000168236">
    <property type="protein sequence ID" value="ENSDARP00000134032"/>
    <property type="gene ID" value="ENSDARG00000102080"/>
</dbReference>
<dbReference type="Ensembl" id="ENSDART00000181407">
    <property type="protein sequence ID" value="ENSDARP00000157298"/>
    <property type="gene ID" value="ENSDARG00000102080"/>
</dbReference>
<dbReference type="Ensembl" id="ENSDART00000182464">
    <property type="protein sequence ID" value="ENSDARP00000145562"/>
    <property type="gene ID" value="ENSDARG00000117121"/>
</dbReference>
<dbReference type="Ensembl" id="ENSDART00000187768">
    <property type="protein sequence ID" value="ENSDARP00000147145"/>
    <property type="gene ID" value="ENSDARG00000115033"/>
</dbReference>
<dbReference type="GeneID" id="393355"/>
<dbReference type="KEGG" id="dre:393355"/>
<dbReference type="AGR" id="ZFIN:ZDB-GENE-040426-1382"/>
<dbReference type="CTD" id="393355"/>
<dbReference type="ZFIN" id="ZDB-GENE-040426-1382">
    <property type="gene designation" value="mif4gda"/>
</dbReference>
<dbReference type="eggNOG" id="KOG3942">
    <property type="taxonomic scope" value="Eukaryota"/>
</dbReference>
<dbReference type="HOGENOM" id="CLU_081010_1_0_1"/>
<dbReference type="InParanoid" id="B0UXU6"/>
<dbReference type="OMA" id="DAGHICY"/>
<dbReference type="OrthoDB" id="6357832at2759"/>
<dbReference type="PhylomeDB" id="B0UXU6"/>
<dbReference type="PRO" id="PR:B0UXU6"/>
<dbReference type="Proteomes" id="UP000000437">
    <property type="component" value="Alternate scaffold 6"/>
</dbReference>
<dbReference type="Proteomes" id="UP000000437">
    <property type="component" value="Chromosome 6"/>
</dbReference>
<dbReference type="Bgee" id="ENSDARG00000102080">
    <property type="expression patterns" value="Expressed in mature ovarian follicle and 24 other cell types or tissues"/>
</dbReference>
<dbReference type="GO" id="GO:0005829">
    <property type="term" value="C:cytosol"/>
    <property type="evidence" value="ECO:0000318"/>
    <property type="project" value="GO_Central"/>
</dbReference>
<dbReference type="GO" id="GO:0005634">
    <property type="term" value="C:nucleus"/>
    <property type="evidence" value="ECO:0007669"/>
    <property type="project" value="UniProtKB-SubCell"/>
</dbReference>
<dbReference type="GO" id="GO:0003723">
    <property type="term" value="F:RNA binding"/>
    <property type="evidence" value="ECO:0007669"/>
    <property type="project" value="InterPro"/>
</dbReference>
<dbReference type="GO" id="GO:0008494">
    <property type="term" value="F:translation activator activity"/>
    <property type="evidence" value="ECO:0000318"/>
    <property type="project" value="GO_Central"/>
</dbReference>
<dbReference type="GO" id="GO:0006446">
    <property type="term" value="P:regulation of translational initiation"/>
    <property type="evidence" value="ECO:0000318"/>
    <property type="project" value="GO_Central"/>
</dbReference>
<dbReference type="Gene3D" id="1.25.40.180">
    <property type="match status" value="1"/>
</dbReference>
<dbReference type="InterPro" id="IPR016024">
    <property type="entry name" value="ARM-type_fold"/>
</dbReference>
<dbReference type="InterPro" id="IPR003890">
    <property type="entry name" value="MIF4G-like_typ-3"/>
</dbReference>
<dbReference type="InterPro" id="IPR051367">
    <property type="entry name" value="mRNA_TranslReg/HistoneTransl"/>
</dbReference>
<dbReference type="PANTHER" id="PTHR23254">
    <property type="entry name" value="EIF4G DOMAIN PROTEIN"/>
    <property type="match status" value="1"/>
</dbReference>
<dbReference type="PANTHER" id="PTHR23254:SF17">
    <property type="entry name" value="MIF4G DOMAIN-CONTAINING PROTEIN"/>
    <property type="match status" value="1"/>
</dbReference>
<dbReference type="Pfam" id="PF02854">
    <property type="entry name" value="MIF4G"/>
    <property type="match status" value="1"/>
</dbReference>
<dbReference type="SUPFAM" id="SSF48371">
    <property type="entry name" value="ARM repeat"/>
    <property type="match status" value="1"/>
</dbReference>
<keyword id="KW-0963">Cytoplasm</keyword>
<keyword id="KW-0539">Nucleus</keyword>
<keyword id="KW-1185">Reference proteome</keyword>
<keyword id="KW-0810">Translation regulation</keyword>
<name>M4GDA_DANRE</name>
<gene>
    <name type="primary">mif4gda</name>
    <name type="ORF">si:ch211-260p11.2</name>
    <name type="ORF">zgc:64152</name>
</gene>
<reference key="1">
    <citation type="journal article" date="2013" name="Nature">
        <title>The zebrafish reference genome sequence and its relationship to the human genome.</title>
        <authorList>
            <person name="Howe K."/>
            <person name="Clark M.D."/>
            <person name="Torroja C.F."/>
            <person name="Torrance J."/>
            <person name="Berthelot C."/>
            <person name="Muffato M."/>
            <person name="Collins J.E."/>
            <person name="Humphray S."/>
            <person name="McLaren K."/>
            <person name="Matthews L."/>
            <person name="McLaren S."/>
            <person name="Sealy I."/>
            <person name="Caccamo M."/>
            <person name="Churcher C."/>
            <person name="Scott C."/>
            <person name="Barrett J.C."/>
            <person name="Koch R."/>
            <person name="Rauch G.J."/>
            <person name="White S."/>
            <person name="Chow W."/>
            <person name="Kilian B."/>
            <person name="Quintais L.T."/>
            <person name="Guerra-Assuncao J.A."/>
            <person name="Zhou Y."/>
            <person name="Gu Y."/>
            <person name="Yen J."/>
            <person name="Vogel J.H."/>
            <person name="Eyre T."/>
            <person name="Redmond S."/>
            <person name="Banerjee R."/>
            <person name="Chi J."/>
            <person name="Fu B."/>
            <person name="Langley E."/>
            <person name="Maguire S.F."/>
            <person name="Laird G.K."/>
            <person name="Lloyd D."/>
            <person name="Kenyon E."/>
            <person name="Donaldson S."/>
            <person name="Sehra H."/>
            <person name="Almeida-King J."/>
            <person name="Loveland J."/>
            <person name="Trevanion S."/>
            <person name="Jones M."/>
            <person name="Quail M."/>
            <person name="Willey D."/>
            <person name="Hunt A."/>
            <person name="Burton J."/>
            <person name="Sims S."/>
            <person name="McLay K."/>
            <person name="Plumb B."/>
            <person name="Davis J."/>
            <person name="Clee C."/>
            <person name="Oliver K."/>
            <person name="Clark R."/>
            <person name="Riddle C."/>
            <person name="Elliot D."/>
            <person name="Threadgold G."/>
            <person name="Harden G."/>
            <person name="Ware D."/>
            <person name="Begum S."/>
            <person name="Mortimore B."/>
            <person name="Kerry G."/>
            <person name="Heath P."/>
            <person name="Phillimore B."/>
            <person name="Tracey A."/>
            <person name="Corby N."/>
            <person name="Dunn M."/>
            <person name="Johnson C."/>
            <person name="Wood J."/>
            <person name="Clark S."/>
            <person name="Pelan S."/>
            <person name="Griffiths G."/>
            <person name="Smith M."/>
            <person name="Glithero R."/>
            <person name="Howden P."/>
            <person name="Barker N."/>
            <person name="Lloyd C."/>
            <person name="Stevens C."/>
            <person name="Harley J."/>
            <person name="Holt K."/>
            <person name="Panagiotidis G."/>
            <person name="Lovell J."/>
            <person name="Beasley H."/>
            <person name="Henderson C."/>
            <person name="Gordon D."/>
            <person name="Auger K."/>
            <person name="Wright D."/>
            <person name="Collins J."/>
            <person name="Raisen C."/>
            <person name="Dyer L."/>
            <person name="Leung K."/>
            <person name="Robertson L."/>
            <person name="Ambridge K."/>
            <person name="Leongamornlert D."/>
            <person name="McGuire S."/>
            <person name="Gilderthorp R."/>
            <person name="Griffiths C."/>
            <person name="Manthravadi D."/>
            <person name="Nichol S."/>
            <person name="Barker G."/>
            <person name="Whitehead S."/>
            <person name="Kay M."/>
            <person name="Brown J."/>
            <person name="Murnane C."/>
            <person name="Gray E."/>
            <person name="Humphries M."/>
            <person name="Sycamore N."/>
            <person name="Barker D."/>
            <person name="Saunders D."/>
            <person name="Wallis J."/>
            <person name="Babbage A."/>
            <person name="Hammond S."/>
            <person name="Mashreghi-Mohammadi M."/>
            <person name="Barr L."/>
            <person name="Martin S."/>
            <person name="Wray P."/>
            <person name="Ellington A."/>
            <person name="Matthews N."/>
            <person name="Ellwood M."/>
            <person name="Woodmansey R."/>
            <person name="Clark G."/>
            <person name="Cooper J."/>
            <person name="Tromans A."/>
            <person name="Grafham D."/>
            <person name="Skuce C."/>
            <person name="Pandian R."/>
            <person name="Andrews R."/>
            <person name="Harrison E."/>
            <person name="Kimberley A."/>
            <person name="Garnett J."/>
            <person name="Fosker N."/>
            <person name="Hall R."/>
            <person name="Garner P."/>
            <person name="Kelly D."/>
            <person name="Bird C."/>
            <person name="Palmer S."/>
            <person name="Gehring I."/>
            <person name="Berger A."/>
            <person name="Dooley C.M."/>
            <person name="Ersan-Urun Z."/>
            <person name="Eser C."/>
            <person name="Geiger H."/>
            <person name="Geisler M."/>
            <person name="Karotki L."/>
            <person name="Kirn A."/>
            <person name="Konantz J."/>
            <person name="Konantz M."/>
            <person name="Oberlander M."/>
            <person name="Rudolph-Geiger S."/>
            <person name="Teucke M."/>
            <person name="Lanz C."/>
            <person name="Raddatz G."/>
            <person name="Osoegawa K."/>
            <person name="Zhu B."/>
            <person name="Rapp A."/>
            <person name="Widaa S."/>
            <person name="Langford C."/>
            <person name="Yang F."/>
            <person name="Schuster S.C."/>
            <person name="Carter N.P."/>
            <person name="Harrow J."/>
            <person name="Ning Z."/>
            <person name="Herrero J."/>
            <person name="Searle S.M."/>
            <person name="Enright A."/>
            <person name="Geisler R."/>
            <person name="Plasterk R.H."/>
            <person name="Lee C."/>
            <person name="Westerfield M."/>
            <person name="de Jong P.J."/>
            <person name="Zon L.I."/>
            <person name="Postlethwait J.H."/>
            <person name="Nusslein-Volhard C."/>
            <person name="Hubbard T.J."/>
            <person name="Roest Crollius H."/>
            <person name="Rogers J."/>
            <person name="Stemple D.L."/>
        </authorList>
    </citation>
    <scope>NUCLEOTIDE SEQUENCE [LARGE SCALE GENOMIC DNA]</scope>
    <source>
        <strain>Tuebingen</strain>
    </source>
</reference>
<reference key="2">
    <citation type="submission" date="2003-06" db="EMBL/GenBank/DDBJ databases">
        <authorList>
            <consortium name="NIH - Zebrafish Gene Collection (ZGC) project"/>
        </authorList>
    </citation>
    <scope>NUCLEOTIDE SEQUENCE [LARGE SCALE MRNA]</scope>
    <source>
        <tissue>Kidney</tissue>
    </source>
</reference>
<sequence>MDSAWTALDMETQTMLKTAIKDPKTVDLEKLSNAVVEHSLKDLSFCKDAGRMCYAVVQAEAQKTASSVFRRNLLNRLQQEFIAREETRKRSMQEWVCVVTFICSIFDYIKVNNSPIAALVDPVYDCLFGLAQPDSLMNEEEVDCLVVQLHRVGEQLEQTNSERMNQLFYLLRDGFLLQEDLSSMTRLLLLEILEFRASGWTLSETAHKYYYSEVAD</sequence>
<accession>B0UXU6</accession>
<accession>Q7T324</accession>
<comment type="function">
    <text evidence="1">Functions in replication-dependent translation of histone mRNAs which differ from other eukaryotic mRNAs in that they do not end with a poly-A tail but a stem-loop. May participate in circularizing those mRNAs specifically enhancing their translation (By similarity).</text>
</comment>
<comment type="subunit">
    <text evidence="1">Interacts with eif4g1, eif4g2 and slbp; probably tethered by SLBP to the 3'-end of mRNAs ending with the histone stem-loop, it also interacts with eif4g1 which is bound to their 5'-end.</text>
</comment>
<comment type="subcellular location">
    <subcellularLocation>
        <location evidence="1">Cytoplasm</location>
    </subcellularLocation>
    <subcellularLocation>
        <location evidence="1">Nucleus</location>
    </subcellularLocation>
</comment>
<comment type="similarity">
    <text evidence="2">Belongs to the MIF4GD family.</text>
</comment>
<evidence type="ECO:0000250" key="1"/>
<evidence type="ECO:0000305" key="2"/>
<feature type="chain" id="PRO_0000337093" description="MIF4G domain-containing protein A">
    <location>
        <begin position="1"/>
        <end position="216"/>
    </location>
</feature>
<feature type="domain" description="MIF4G">
    <location>
        <begin position="2"/>
        <end position="199"/>
    </location>
</feature>
<feature type="sequence conflict" description="In Ref. 2; AAH53283." evidence="2" ref="2">
    <original>G</original>
    <variation>R</variation>
    <location>
        <position position="129"/>
    </location>
</feature>
<protein>
    <recommendedName>
        <fullName>MIF4G domain-containing protein A</fullName>
    </recommendedName>
</protein>
<proteinExistence type="evidence at transcript level"/>
<organism>
    <name type="scientific">Danio rerio</name>
    <name type="common">Zebrafish</name>
    <name type="synonym">Brachydanio rerio</name>
    <dbReference type="NCBI Taxonomy" id="7955"/>
    <lineage>
        <taxon>Eukaryota</taxon>
        <taxon>Metazoa</taxon>
        <taxon>Chordata</taxon>
        <taxon>Craniata</taxon>
        <taxon>Vertebrata</taxon>
        <taxon>Euteleostomi</taxon>
        <taxon>Actinopterygii</taxon>
        <taxon>Neopterygii</taxon>
        <taxon>Teleostei</taxon>
        <taxon>Ostariophysi</taxon>
        <taxon>Cypriniformes</taxon>
        <taxon>Danionidae</taxon>
        <taxon>Danioninae</taxon>
        <taxon>Danio</taxon>
    </lineage>
</organism>